<dbReference type="EMBL" id="AP003271">
    <property type="protein sequence ID" value="BAD73384.1"/>
    <property type="molecule type" value="Genomic_DNA"/>
</dbReference>
<dbReference type="EMBL" id="AP004366">
    <property type="protein sequence ID" value="BAD73789.1"/>
    <property type="molecule type" value="Genomic_DNA"/>
</dbReference>
<dbReference type="EMBL" id="AP008207">
    <property type="protein sequence ID" value="BAF06636.2"/>
    <property type="molecule type" value="Genomic_DNA"/>
</dbReference>
<dbReference type="EMBL" id="AP014957">
    <property type="protein sequence ID" value="BAS75094.1"/>
    <property type="molecule type" value="Genomic_DNA"/>
</dbReference>
<dbReference type="EMBL" id="AK106074">
    <property type="protein sequence ID" value="BAG97547.1"/>
    <property type="molecule type" value="mRNA"/>
</dbReference>
<dbReference type="RefSeq" id="XP_015611509.1">
    <property type="nucleotide sequence ID" value="XM_015756023.1"/>
</dbReference>
<dbReference type="FunCoup" id="Q0JHZ2">
    <property type="interactions" value="3689"/>
</dbReference>
<dbReference type="STRING" id="39947.Q0JHZ2"/>
<dbReference type="iPTMnet" id="Q0JHZ2"/>
<dbReference type="PaxDb" id="39947-Q0JHZ2"/>
<dbReference type="EnsemblPlants" id="Os01t0834700-01">
    <property type="protein sequence ID" value="Os01t0834700-01"/>
    <property type="gene ID" value="Os01g0834700"/>
</dbReference>
<dbReference type="Gramene" id="Os01t0834700-01">
    <property type="protein sequence ID" value="Os01t0834700-01"/>
    <property type="gene ID" value="Os01g0834700"/>
</dbReference>
<dbReference type="KEGG" id="dosa:Os01g0834700"/>
<dbReference type="eggNOG" id="KOG1763">
    <property type="taxonomic scope" value="Eukaryota"/>
</dbReference>
<dbReference type="HOGENOM" id="CLU_042870_0_1_1"/>
<dbReference type="InParanoid" id="Q0JHZ2"/>
<dbReference type="OMA" id="GREMFYF"/>
<dbReference type="OrthoDB" id="278280at2759"/>
<dbReference type="Proteomes" id="UP000000763">
    <property type="component" value="Chromosome 1"/>
</dbReference>
<dbReference type="Proteomes" id="UP000059680">
    <property type="component" value="Chromosome 1"/>
</dbReference>
<dbReference type="ExpressionAtlas" id="Q0JHZ2">
    <property type="expression patterns" value="baseline and differential"/>
</dbReference>
<dbReference type="GO" id="GO:0005829">
    <property type="term" value="C:cytosol"/>
    <property type="evidence" value="ECO:0000318"/>
    <property type="project" value="GO_Central"/>
</dbReference>
<dbReference type="GO" id="GO:0003677">
    <property type="term" value="F:DNA binding"/>
    <property type="evidence" value="ECO:0007669"/>
    <property type="project" value="UniProtKB-KW"/>
</dbReference>
<dbReference type="GO" id="GO:0008270">
    <property type="term" value="F:zinc ion binding"/>
    <property type="evidence" value="ECO:0007669"/>
    <property type="project" value="UniProtKB-KW"/>
</dbReference>
<dbReference type="GO" id="GO:0002181">
    <property type="term" value="P:cytoplasmic translation"/>
    <property type="evidence" value="ECO:0000318"/>
    <property type="project" value="GO_Central"/>
</dbReference>
<dbReference type="Gene3D" id="6.20.400.10">
    <property type="match status" value="1"/>
</dbReference>
<dbReference type="Gene3D" id="4.10.1000.10">
    <property type="entry name" value="Zinc finger, CCCH-type"/>
    <property type="match status" value="1"/>
</dbReference>
<dbReference type="InterPro" id="IPR032378">
    <property type="entry name" value="ZC3H15/TMA46_C"/>
</dbReference>
<dbReference type="InterPro" id="IPR000571">
    <property type="entry name" value="Znf_CCCH"/>
</dbReference>
<dbReference type="InterPro" id="IPR036855">
    <property type="entry name" value="Znf_CCCH_sf"/>
</dbReference>
<dbReference type="PANTHER" id="PTHR12681:SF0">
    <property type="entry name" value="ZINC FINGER CCCH DOMAIN-CONTAINING PROTEIN 15"/>
    <property type="match status" value="1"/>
</dbReference>
<dbReference type="PANTHER" id="PTHR12681">
    <property type="entry name" value="ZINC FINGER-CONTAINING PROTEIN P48ZNF"/>
    <property type="match status" value="1"/>
</dbReference>
<dbReference type="Pfam" id="PF16543">
    <property type="entry name" value="DFRP_C"/>
    <property type="match status" value="1"/>
</dbReference>
<dbReference type="SMART" id="SM00356">
    <property type="entry name" value="ZnF_C3H1"/>
    <property type="match status" value="2"/>
</dbReference>
<dbReference type="SUPFAM" id="SSF90229">
    <property type="entry name" value="CCCH zinc finger"/>
    <property type="match status" value="1"/>
</dbReference>
<dbReference type="PROSITE" id="PS50103">
    <property type="entry name" value="ZF_C3H1"/>
    <property type="match status" value="2"/>
</dbReference>
<reference key="1">
    <citation type="journal article" date="2002" name="Nature">
        <title>The genome sequence and structure of rice chromosome 1.</title>
        <authorList>
            <person name="Sasaki T."/>
            <person name="Matsumoto T."/>
            <person name="Yamamoto K."/>
            <person name="Sakata K."/>
            <person name="Baba T."/>
            <person name="Katayose Y."/>
            <person name="Wu J."/>
            <person name="Niimura Y."/>
            <person name="Cheng Z."/>
            <person name="Nagamura Y."/>
            <person name="Antonio B.A."/>
            <person name="Kanamori H."/>
            <person name="Hosokawa S."/>
            <person name="Masukawa M."/>
            <person name="Arikawa K."/>
            <person name="Chiden Y."/>
            <person name="Hayashi M."/>
            <person name="Okamoto M."/>
            <person name="Ando T."/>
            <person name="Aoki H."/>
            <person name="Arita K."/>
            <person name="Hamada M."/>
            <person name="Harada C."/>
            <person name="Hijishita S."/>
            <person name="Honda M."/>
            <person name="Ichikawa Y."/>
            <person name="Idonuma A."/>
            <person name="Iijima M."/>
            <person name="Ikeda M."/>
            <person name="Ikeno M."/>
            <person name="Ito S."/>
            <person name="Ito T."/>
            <person name="Ito Y."/>
            <person name="Ito Y."/>
            <person name="Iwabuchi A."/>
            <person name="Kamiya K."/>
            <person name="Karasawa W."/>
            <person name="Katagiri S."/>
            <person name="Kikuta A."/>
            <person name="Kobayashi N."/>
            <person name="Kono I."/>
            <person name="Machita K."/>
            <person name="Maehara T."/>
            <person name="Mizuno H."/>
            <person name="Mizubayashi T."/>
            <person name="Mukai Y."/>
            <person name="Nagasaki H."/>
            <person name="Nakashima M."/>
            <person name="Nakama Y."/>
            <person name="Nakamichi Y."/>
            <person name="Nakamura M."/>
            <person name="Namiki N."/>
            <person name="Negishi M."/>
            <person name="Ohta I."/>
            <person name="Ono N."/>
            <person name="Saji S."/>
            <person name="Sakai K."/>
            <person name="Shibata M."/>
            <person name="Shimokawa T."/>
            <person name="Shomura A."/>
            <person name="Song J."/>
            <person name="Takazaki Y."/>
            <person name="Terasawa K."/>
            <person name="Tsuji K."/>
            <person name="Waki K."/>
            <person name="Yamagata H."/>
            <person name="Yamane H."/>
            <person name="Yoshiki S."/>
            <person name="Yoshihara R."/>
            <person name="Yukawa K."/>
            <person name="Zhong H."/>
            <person name="Iwama H."/>
            <person name="Endo T."/>
            <person name="Ito H."/>
            <person name="Hahn J.H."/>
            <person name="Kim H.-I."/>
            <person name="Eun M.-Y."/>
            <person name="Yano M."/>
            <person name="Jiang J."/>
            <person name="Gojobori T."/>
        </authorList>
    </citation>
    <scope>NUCLEOTIDE SEQUENCE [LARGE SCALE GENOMIC DNA]</scope>
    <source>
        <strain>cv. Nipponbare</strain>
    </source>
</reference>
<reference key="2">
    <citation type="journal article" date="2005" name="Nature">
        <title>The map-based sequence of the rice genome.</title>
        <authorList>
            <consortium name="International rice genome sequencing project (IRGSP)"/>
        </authorList>
    </citation>
    <scope>NUCLEOTIDE SEQUENCE [LARGE SCALE GENOMIC DNA]</scope>
    <source>
        <strain>cv. Nipponbare</strain>
    </source>
</reference>
<reference key="3">
    <citation type="journal article" date="2008" name="Nucleic Acids Res.">
        <title>The rice annotation project database (RAP-DB): 2008 update.</title>
        <authorList>
            <consortium name="The rice annotation project (RAP)"/>
        </authorList>
    </citation>
    <scope>GENOME REANNOTATION</scope>
    <source>
        <strain>cv. Nipponbare</strain>
    </source>
</reference>
<reference key="4">
    <citation type="journal article" date="2013" name="Rice">
        <title>Improvement of the Oryza sativa Nipponbare reference genome using next generation sequence and optical map data.</title>
        <authorList>
            <person name="Kawahara Y."/>
            <person name="de la Bastide M."/>
            <person name="Hamilton J.P."/>
            <person name="Kanamori H."/>
            <person name="McCombie W.R."/>
            <person name="Ouyang S."/>
            <person name="Schwartz D.C."/>
            <person name="Tanaka T."/>
            <person name="Wu J."/>
            <person name="Zhou S."/>
            <person name="Childs K.L."/>
            <person name="Davidson R.M."/>
            <person name="Lin H."/>
            <person name="Quesada-Ocampo L."/>
            <person name="Vaillancourt B."/>
            <person name="Sakai H."/>
            <person name="Lee S.S."/>
            <person name="Kim J."/>
            <person name="Numa H."/>
            <person name="Itoh T."/>
            <person name="Buell C.R."/>
            <person name="Matsumoto T."/>
        </authorList>
    </citation>
    <scope>GENOME REANNOTATION</scope>
    <source>
        <strain>cv. Nipponbare</strain>
    </source>
</reference>
<reference key="5">
    <citation type="journal article" date="2003" name="Science">
        <title>Collection, mapping, and annotation of over 28,000 cDNA clones from japonica rice.</title>
        <authorList>
            <consortium name="The rice full-length cDNA consortium"/>
        </authorList>
    </citation>
    <scope>NUCLEOTIDE SEQUENCE [LARGE SCALE MRNA]</scope>
    <source>
        <strain>cv. Nipponbare</strain>
    </source>
</reference>
<reference key="6">
    <citation type="journal article" date="2008" name="BMC Genomics">
        <title>Genome-wide analysis of CCCH zinc finger family in Arabidopsis and rice.</title>
        <authorList>
            <person name="Wang D."/>
            <person name="Guo Y."/>
            <person name="Wu C."/>
            <person name="Yang G."/>
            <person name="Li Y."/>
            <person name="Zheng C."/>
        </authorList>
    </citation>
    <scope>NOMENCLATURE</scope>
</reference>
<gene>
    <name type="ordered locus">Os01g0834700</name>
    <name type="ordered locus">LOC_Os01g61830</name>
    <name type="ORF">P0460C04.40</name>
    <name type="ORF">P0506B12.7</name>
</gene>
<keyword id="KW-0175">Coiled coil</keyword>
<keyword id="KW-0238">DNA-binding</keyword>
<keyword id="KW-0479">Metal-binding</keyword>
<keyword id="KW-1185">Reference proteome</keyword>
<keyword id="KW-0677">Repeat</keyword>
<keyword id="KW-0862">Zinc</keyword>
<keyword id="KW-0863">Zinc-finger</keyword>
<sequence>MPPKKAAPSKADLAKKQKVVEDKTFGLKNKNKSKNVQKYVQSLHQAVQPKPDPTKTAAKKKKEEEKAREKELNDLFKVAVSQPKVPVGVDPKSIVCEFFKVGQCQKGFKCKFSHDLNVQRKGEKIDIYTDKRDAETMEDWDQETLEKVVASKGAEYQQNKPTDIVCKYFLDAVEKKQYGWFWVCPNGGKDCHYRHALPPGYVLKSQMKALLEEESEKIAIEDEIEDQRKKVKTTTPMTTDLFMEWKRKKAEEREAGLAALRAERAKNDRMSGRELFMADSSVFVDDAEAYDVYERQEESEANEEPSNKNQDEGPSSSTSNGKEVEESDDEDINIDDDLDIDELNELEASLSRTSIQIREPGEGTSS</sequence>
<feature type="chain" id="PRO_0000346808" description="Zinc finger CCCH domain-containing protein 11">
    <location>
        <begin position="1"/>
        <end position="366"/>
    </location>
</feature>
<feature type="zinc finger region" description="C3H1-type 1" evidence="2">
    <location>
        <begin position="90"/>
        <end position="117"/>
    </location>
</feature>
<feature type="zinc finger region" description="C3H1-type 2" evidence="2">
    <location>
        <begin position="160"/>
        <end position="198"/>
    </location>
</feature>
<feature type="region of interest" description="Disordered" evidence="3">
    <location>
        <begin position="43"/>
        <end position="66"/>
    </location>
</feature>
<feature type="region of interest" description="Disordered" evidence="3">
    <location>
        <begin position="293"/>
        <end position="338"/>
    </location>
</feature>
<feature type="coiled-coil region" evidence="1">
    <location>
        <begin position="54"/>
        <end position="79"/>
    </location>
</feature>
<feature type="coiled-coil region" evidence="1">
    <location>
        <begin position="208"/>
        <end position="234"/>
    </location>
</feature>
<feature type="compositionally biased region" description="Polar residues" evidence="3">
    <location>
        <begin position="312"/>
        <end position="321"/>
    </location>
</feature>
<feature type="compositionally biased region" description="Acidic residues" evidence="3">
    <location>
        <begin position="325"/>
        <end position="338"/>
    </location>
</feature>
<organism>
    <name type="scientific">Oryza sativa subsp. japonica</name>
    <name type="common">Rice</name>
    <dbReference type="NCBI Taxonomy" id="39947"/>
    <lineage>
        <taxon>Eukaryota</taxon>
        <taxon>Viridiplantae</taxon>
        <taxon>Streptophyta</taxon>
        <taxon>Embryophyta</taxon>
        <taxon>Tracheophyta</taxon>
        <taxon>Spermatophyta</taxon>
        <taxon>Magnoliopsida</taxon>
        <taxon>Liliopsida</taxon>
        <taxon>Poales</taxon>
        <taxon>Poaceae</taxon>
        <taxon>BOP clade</taxon>
        <taxon>Oryzoideae</taxon>
        <taxon>Oryzeae</taxon>
        <taxon>Oryzinae</taxon>
        <taxon>Oryza</taxon>
        <taxon>Oryza sativa</taxon>
    </lineage>
</organism>
<name>C3H11_ORYSJ</name>
<evidence type="ECO:0000255" key="1"/>
<evidence type="ECO:0000255" key="2">
    <source>
        <dbReference type="PROSITE-ProRule" id="PRU00723"/>
    </source>
</evidence>
<evidence type="ECO:0000256" key="3">
    <source>
        <dbReference type="SAM" id="MobiDB-lite"/>
    </source>
</evidence>
<proteinExistence type="evidence at transcript level"/>
<protein>
    <recommendedName>
        <fullName>Zinc finger CCCH domain-containing protein 11</fullName>
        <shortName>OsC3H11</shortName>
    </recommendedName>
</protein>
<accession>Q0JHZ2</accession>
<accession>A0A0P0V9X4</accession>
<accession>Q5QMG2</accession>